<proteinExistence type="inferred from homology"/>
<organism>
    <name type="scientific">Cronobacter sakazakii (strain ATCC BAA-894)</name>
    <name type="common">Enterobacter sakazakii</name>
    <dbReference type="NCBI Taxonomy" id="290339"/>
    <lineage>
        <taxon>Bacteria</taxon>
        <taxon>Pseudomonadati</taxon>
        <taxon>Pseudomonadota</taxon>
        <taxon>Gammaproteobacteria</taxon>
        <taxon>Enterobacterales</taxon>
        <taxon>Enterobacteriaceae</taxon>
        <taxon>Cronobacter</taxon>
    </lineage>
</organism>
<sequence length="104" mass="11316">MAAKIRRDDEVIVLTGKDKGKRGKVKNVLSSGKVIVEGINLVKKHQKPVPALNQPGGIVEKEAAIQVSNVAIFNAATGKADRVGFRFEDGKKVRFFKSNSETIK</sequence>
<reference key="1">
    <citation type="journal article" date="2010" name="PLoS ONE">
        <title>Genome sequence of Cronobacter sakazakii BAA-894 and comparative genomic hybridization analysis with other Cronobacter species.</title>
        <authorList>
            <person name="Kucerova E."/>
            <person name="Clifton S.W."/>
            <person name="Xia X.Q."/>
            <person name="Long F."/>
            <person name="Porwollik S."/>
            <person name="Fulton L."/>
            <person name="Fronick C."/>
            <person name="Minx P."/>
            <person name="Kyung K."/>
            <person name="Warren W."/>
            <person name="Fulton R."/>
            <person name="Feng D."/>
            <person name="Wollam A."/>
            <person name="Shah N."/>
            <person name="Bhonagiri V."/>
            <person name="Nash W.E."/>
            <person name="Hallsworth-Pepin K."/>
            <person name="Wilson R.K."/>
            <person name="McClelland M."/>
            <person name="Forsythe S.J."/>
        </authorList>
    </citation>
    <scope>NUCLEOTIDE SEQUENCE [LARGE SCALE GENOMIC DNA]</scope>
    <source>
        <strain>ATCC BAA-894</strain>
    </source>
</reference>
<protein>
    <recommendedName>
        <fullName evidence="1">Large ribosomal subunit protein uL24</fullName>
    </recommendedName>
    <alternativeName>
        <fullName evidence="2">50S ribosomal protein L24</fullName>
    </alternativeName>
</protein>
<evidence type="ECO:0000255" key="1">
    <source>
        <dbReference type="HAMAP-Rule" id="MF_01326"/>
    </source>
</evidence>
<evidence type="ECO:0000305" key="2"/>
<name>RL24_CROS8</name>
<dbReference type="EMBL" id="CP000783">
    <property type="protein sequence ID" value="ABU75325.1"/>
    <property type="molecule type" value="Genomic_DNA"/>
</dbReference>
<dbReference type="RefSeq" id="WP_000729185.1">
    <property type="nucleotide sequence ID" value="NC_009778.1"/>
</dbReference>
<dbReference type="SMR" id="A7MPH5"/>
<dbReference type="GeneID" id="93778678"/>
<dbReference type="KEGG" id="esa:ESA_00016"/>
<dbReference type="HOGENOM" id="CLU_093315_2_2_6"/>
<dbReference type="Proteomes" id="UP000000260">
    <property type="component" value="Chromosome"/>
</dbReference>
<dbReference type="GO" id="GO:0005829">
    <property type="term" value="C:cytosol"/>
    <property type="evidence" value="ECO:0007669"/>
    <property type="project" value="UniProtKB-ARBA"/>
</dbReference>
<dbReference type="GO" id="GO:1990904">
    <property type="term" value="C:ribonucleoprotein complex"/>
    <property type="evidence" value="ECO:0007669"/>
    <property type="project" value="UniProtKB-KW"/>
</dbReference>
<dbReference type="GO" id="GO:0005840">
    <property type="term" value="C:ribosome"/>
    <property type="evidence" value="ECO:0007669"/>
    <property type="project" value="UniProtKB-KW"/>
</dbReference>
<dbReference type="GO" id="GO:0019843">
    <property type="term" value="F:rRNA binding"/>
    <property type="evidence" value="ECO:0007669"/>
    <property type="project" value="UniProtKB-UniRule"/>
</dbReference>
<dbReference type="GO" id="GO:0003735">
    <property type="term" value="F:structural constituent of ribosome"/>
    <property type="evidence" value="ECO:0007669"/>
    <property type="project" value="InterPro"/>
</dbReference>
<dbReference type="GO" id="GO:0006412">
    <property type="term" value="P:translation"/>
    <property type="evidence" value="ECO:0007669"/>
    <property type="project" value="UniProtKB-UniRule"/>
</dbReference>
<dbReference type="CDD" id="cd06089">
    <property type="entry name" value="KOW_RPL26"/>
    <property type="match status" value="1"/>
</dbReference>
<dbReference type="FunFam" id="2.30.30.30:FF:000004">
    <property type="entry name" value="50S ribosomal protein L24"/>
    <property type="match status" value="1"/>
</dbReference>
<dbReference type="Gene3D" id="2.30.30.30">
    <property type="match status" value="1"/>
</dbReference>
<dbReference type="HAMAP" id="MF_01326_B">
    <property type="entry name" value="Ribosomal_uL24_B"/>
    <property type="match status" value="1"/>
</dbReference>
<dbReference type="InterPro" id="IPR005824">
    <property type="entry name" value="KOW"/>
</dbReference>
<dbReference type="InterPro" id="IPR014722">
    <property type="entry name" value="Rib_uL2_dom2"/>
</dbReference>
<dbReference type="InterPro" id="IPR003256">
    <property type="entry name" value="Ribosomal_uL24"/>
</dbReference>
<dbReference type="InterPro" id="IPR005825">
    <property type="entry name" value="Ribosomal_uL24_CS"/>
</dbReference>
<dbReference type="InterPro" id="IPR041988">
    <property type="entry name" value="Ribosomal_uL24_KOW"/>
</dbReference>
<dbReference type="InterPro" id="IPR008991">
    <property type="entry name" value="Translation_prot_SH3-like_sf"/>
</dbReference>
<dbReference type="NCBIfam" id="TIGR01079">
    <property type="entry name" value="rplX_bact"/>
    <property type="match status" value="1"/>
</dbReference>
<dbReference type="PANTHER" id="PTHR12903">
    <property type="entry name" value="MITOCHONDRIAL RIBOSOMAL PROTEIN L24"/>
    <property type="match status" value="1"/>
</dbReference>
<dbReference type="Pfam" id="PF00467">
    <property type="entry name" value="KOW"/>
    <property type="match status" value="1"/>
</dbReference>
<dbReference type="Pfam" id="PF17136">
    <property type="entry name" value="ribosomal_L24"/>
    <property type="match status" value="1"/>
</dbReference>
<dbReference type="SMART" id="SM00739">
    <property type="entry name" value="KOW"/>
    <property type="match status" value="1"/>
</dbReference>
<dbReference type="SUPFAM" id="SSF50104">
    <property type="entry name" value="Translation proteins SH3-like domain"/>
    <property type="match status" value="1"/>
</dbReference>
<dbReference type="PROSITE" id="PS01108">
    <property type="entry name" value="RIBOSOMAL_L24"/>
    <property type="match status" value="1"/>
</dbReference>
<keyword id="KW-1185">Reference proteome</keyword>
<keyword id="KW-0687">Ribonucleoprotein</keyword>
<keyword id="KW-0689">Ribosomal protein</keyword>
<keyword id="KW-0694">RNA-binding</keyword>
<keyword id="KW-0699">rRNA-binding</keyword>
<comment type="function">
    <text evidence="1">One of two assembly initiator proteins, it binds directly to the 5'-end of the 23S rRNA, where it nucleates assembly of the 50S subunit.</text>
</comment>
<comment type="function">
    <text evidence="1">One of the proteins that surrounds the polypeptide exit tunnel on the outside of the subunit.</text>
</comment>
<comment type="subunit">
    <text evidence="1">Part of the 50S ribosomal subunit.</text>
</comment>
<comment type="similarity">
    <text evidence="1">Belongs to the universal ribosomal protein uL24 family.</text>
</comment>
<accession>A7MPH5</accession>
<feature type="chain" id="PRO_1000052212" description="Large ribosomal subunit protein uL24">
    <location>
        <begin position="1"/>
        <end position="104"/>
    </location>
</feature>
<gene>
    <name evidence="1" type="primary">rplX</name>
    <name type="ordered locus">ESA_00016</name>
</gene>